<gene>
    <name evidence="1" type="primary">mraZ</name>
    <name type="ordered locus">PFLU_0938</name>
</gene>
<comment type="subunit">
    <text evidence="1">Forms oligomers.</text>
</comment>
<comment type="subcellular location">
    <subcellularLocation>
        <location evidence="1">Cytoplasm</location>
        <location evidence="1">Nucleoid</location>
    </subcellularLocation>
</comment>
<comment type="similarity">
    <text evidence="1">Belongs to the MraZ family.</text>
</comment>
<organism>
    <name type="scientific">Pseudomonas fluorescens (strain SBW25)</name>
    <dbReference type="NCBI Taxonomy" id="216595"/>
    <lineage>
        <taxon>Bacteria</taxon>
        <taxon>Pseudomonadati</taxon>
        <taxon>Pseudomonadota</taxon>
        <taxon>Gammaproteobacteria</taxon>
        <taxon>Pseudomonadales</taxon>
        <taxon>Pseudomonadaceae</taxon>
        <taxon>Pseudomonas</taxon>
    </lineage>
</organism>
<name>MRAZ_PSEFS</name>
<evidence type="ECO:0000255" key="1">
    <source>
        <dbReference type="HAMAP-Rule" id="MF_01008"/>
    </source>
</evidence>
<evidence type="ECO:0000255" key="2">
    <source>
        <dbReference type="PROSITE-ProRule" id="PRU01076"/>
    </source>
</evidence>
<keyword id="KW-0963">Cytoplasm</keyword>
<keyword id="KW-0238">DNA-binding</keyword>
<keyword id="KW-0677">Repeat</keyword>
<keyword id="KW-0804">Transcription</keyword>
<keyword id="KW-0805">Transcription regulation</keyword>
<accession>C3KBY5</accession>
<reference key="1">
    <citation type="journal article" date="2009" name="Genome Biol.">
        <title>Genomic and genetic analyses of diversity and plant interactions of Pseudomonas fluorescens.</title>
        <authorList>
            <person name="Silby M.W."/>
            <person name="Cerdeno-Tarraga A.M."/>
            <person name="Vernikos G.S."/>
            <person name="Giddens S.R."/>
            <person name="Jackson R.W."/>
            <person name="Preston G.M."/>
            <person name="Zhang X.-X."/>
            <person name="Moon C.D."/>
            <person name="Gehrig S.M."/>
            <person name="Godfrey S.A.C."/>
            <person name="Knight C.G."/>
            <person name="Malone J.G."/>
            <person name="Robinson Z."/>
            <person name="Spiers A.J."/>
            <person name="Harris S."/>
            <person name="Challis G.L."/>
            <person name="Yaxley A.M."/>
            <person name="Harris D."/>
            <person name="Seeger K."/>
            <person name="Murphy L."/>
            <person name="Rutter S."/>
            <person name="Squares R."/>
            <person name="Quail M.A."/>
            <person name="Saunders E."/>
            <person name="Mavromatis K."/>
            <person name="Brettin T.S."/>
            <person name="Bentley S.D."/>
            <person name="Hothersall J."/>
            <person name="Stephens E."/>
            <person name="Thomas C.M."/>
            <person name="Parkhill J."/>
            <person name="Levy S.B."/>
            <person name="Rainey P.B."/>
            <person name="Thomson N.R."/>
        </authorList>
    </citation>
    <scope>NUCLEOTIDE SEQUENCE [LARGE SCALE GENOMIC DNA]</scope>
    <source>
        <strain>SBW25</strain>
    </source>
</reference>
<sequence length="151" mass="17062">MFRGANAISLDAKGRLAMPSRYRDELISRSSGQLIITIDAVDPCLCVYPLDEWELIETKLRALPSLREENRRLQRLLIGNAVDLELDGSGRFLVPPRLREYAKLDKRAMLVGQLNKFQLWDEDAWDAVSAADLAAIQQPGAMPDELRDLIL</sequence>
<feature type="chain" id="PRO_1000213181" description="Transcriptional regulator MraZ">
    <location>
        <begin position="1"/>
        <end position="151"/>
    </location>
</feature>
<feature type="domain" description="SpoVT-AbrB 1" evidence="2">
    <location>
        <begin position="5"/>
        <end position="52"/>
    </location>
</feature>
<feature type="domain" description="SpoVT-AbrB 2" evidence="2">
    <location>
        <begin position="81"/>
        <end position="124"/>
    </location>
</feature>
<dbReference type="EMBL" id="AM181176">
    <property type="protein sequence ID" value="CAY47204.1"/>
    <property type="molecule type" value="Genomic_DNA"/>
</dbReference>
<dbReference type="RefSeq" id="WP_003171868.1">
    <property type="nucleotide sequence ID" value="NC_012660.1"/>
</dbReference>
<dbReference type="SMR" id="C3KBY5"/>
<dbReference type="STRING" id="294.SRM1_04730"/>
<dbReference type="GeneID" id="97923455"/>
<dbReference type="eggNOG" id="COG2001">
    <property type="taxonomic scope" value="Bacteria"/>
</dbReference>
<dbReference type="HOGENOM" id="CLU_107907_2_0_6"/>
<dbReference type="OrthoDB" id="9807753at2"/>
<dbReference type="GO" id="GO:0005737">
    <property type="term" value="C:cytoplasm"/>
    <property type="evidence" value="ECO:0007669"/>
    <property type="project" value="UniProtKB-UniRule"/>
</dbReference>
<dbReference type="GO" id="GO:0009295">
    <property type="term" value="C:nucleoid"/>
    <property type="evidence" value="ECO:0007669"/>
    <property type="project" value="UniProtKB-SubCell"/>
</dbReference>
<dbReference type="GO" id="GO:0003700">
    <property type="term" value="F:DNA-binding transcription factor activity"/>
    <property type="evidence" value="ECO:0007669"/>
    <property type="project" value="UniProtKB-UniRule"/>
</dbReference>
<dbReference type="GO" id="GO:0000976">
    <property type="term" value="F:transcription cis-regulatory region binding"/>
    <property type="evidence" value="ECO:0007669"/>
    <property type="project" value="TreeGrafter"/>
</dbReference>
<dbReference type="GO" id="GO:2000143">
    <property type="term" value="P:negative regulation of DNA-templated transcription initiation"/>
    <property type="evidence" value="ECO:0007669"/>
    <property type="project" value="TreeGrafter"/>
</dbReference>
<dbReference type="CDD" id="cd16321">
    <property type="entry name" value="MraZ_C"/>
    <property type="match status" value="1"/>
</dbReference>
<dbReference type="CDD" id="cd16320">
    <property type="entry name" value="MraZ_N"/>
    <property type="match status" value="1"/>
</dbReference>
<dbReference type="Gene3D" id="3.40.1550.20">
    <property type="entry name" value="Transcriptional regulator MraZ domain"/>
    <property type="match status" value="1"/>
</dbReference>
<dbReference type="HAMAP" id="MF_01008">
    <property type="entry name" value="MraZ"/>
    <property type="match status" value="1"/>
</dbReference>
<dbReference type="InterPro" id="IPR003444">
    <property type="entry name" value="MraZ"/>
</dbReference>
<dbReference type="InterPro" id="IPR035644">
    <property type="entry name" value="MraZ_C"/>
</dbReference>
<dbReference type="InterPro" id="IPR020603">
    <property type="entry name" value="MraZ_dom"/>
</dbReference>
<dbReference type="InterPro" id="IPR035642">
    <property type="entry name" value="MraZ_N"/>
</dbReference>
<dbReference type="InterPro" id="IPR038619">
    <property type="entry name" value="MraZ_sf"/>
</dbReference>
<dbReference type="InterPro" id="IPR007159">
    <property type="entry name" value="SpoVT-AbrB_dom"/>
</dbReference>
<dbReference type="InterPro" id="IPR037914">
    <property type="entry name" value="SpoVT-AbrB_sf"/>
</dbReference>
<dbReference type="NCBIfam" id="TIGR00242">
    <property type="entry name" value="division/cell wall cluster transcriptional repressor MraZ"/>
    <property type="match status" value="1"/>
</dbReference>
<dbReference type="PANTHER" id="PTHR34701">
    <property type="entry name" value="TRANSCRIPTIONAL REGULATOR MRAZ"/>
    <property type="match status" value="1"/>
</dbReference>
<dbReference type="PANTHER" id="PTHR34701:SF1">
    <property type="entry name" value="TRANSCRIPTIONAL REGULATOR MRAZ"/>
    <property type="match status" value="1"/>
</dbReference>
<dbReference type="Pfam" id="PF02381">
    <property type="entry name" value="MraZ"/>
    <property type="match status" value="2"/>
</dbReference>
<dbReference type="SUPFAM" id="SSF89447">
    <property type="entry name" value="AbrB/MazE/MraZ-like"/>
    <property type="match status" value="1"/>
</dbReference>
<dbReference type="PROSITE" id="PS51740">
    <property type="entry name" value="SPOVT_ABRB"/>
    <property type="match status" value="2"/>
</dbReference>
<protein>
    <recommendedName>
        <fullName>Transcriptional regulator MraZ</fullName>
    </recommendedName>
</protein>
<proteinExistence type="inferred from homology"/>